<reference key="1">
    <citation type="submission" date="2005-09" db="EMBL/GenBank/DDBJ databases">
        <title>Complete sequence of chromosome 1 of Rhodobacter sphaeroides 2.4.1.</title>
        <authorList>
            <person name="Copeland A."/>
            <person name="Lucas S."/>
            <person name="Lapidus A."/>
            <person name="Barry K."/>
            <person name="Detter J.C."/>
            <person name="Glavina T."/>
            <person name="Hammon N."/>
            <person name="Israni S."/>
            <person name="Pitluck S."/>
            <person name="Richardson P."/>
            <person name="Mackenzie C."/>
            <person name="Choudhary M."/>
            <person name="Larimer F."/>
            <person name="Hauser L.J."/>
            <person name="Land M."/>
            <person name="Donohue T.J."/>
            <person name="Kaplan S."/>
        </authorList>
    </citation>
    <scope>NUCLEOTIDE SEQUENCE [LARGE SCALE GENOMIC DNA]</scope>
    <source>
        <strain>ATCC 17023 / DSM 158 / JCM 6121 / CCUG 31486 / LMG 2827 / NBRC 12203 / NCIMB 8253 / ATH 2.4.1.</strain>
    </source>
</reference>
<sequence>MKGILDSILRVGRMIFAPTKTVQYPEEKLPLAPRTRGRIVLTRDPDGQERCVACNLCAAACPVDCIDVVKAETPDGRWYPESFRINFARCIFCGYCEEACPTSAIQLTPDVELADYRRGFLQYEKEDLLISGEGKHPGYRYWDVAGKAIAGKAQDPVDPKDLCP</sequence>
<dbReference type="EC" id="7.1.1.-" evidence="1"/>
<dbReference type="EMBL" id="CP000143">
    <property type="protein sequence ID" value="ABA79282.1"/>
    <property type="molecule type" value="Genomic_DNA"/>
</dbReference>
<dbReference type="RefSeq" id="YP_353183.1">
    <property type="nucleotide sequence ID" value="NC_007493.2"/>
</dbReference>
<dbReference type="SMR" id="Q3J1Q2"/>
<dbReference type="STRING" id="272943.RSP_0107"/>
<dbReference type="EnsemblBacteria" id="ABA79282">
    <property type="protein sequence ID" value="ABA79282"/>
    <property type="gene ID" value="RSP_0107"/>
</dbReference>
<dbReference type="KEGG" id="rsp:RSP_0107"/>
<dbReference type="PATRIC" id="fig|272943.9.peg.2048"/>
<dbReference type="eggNOG" id="COG1143">
    <property type="taxonomic scope" value="Bacteria"/>
</dbReference>
<dbReference type="OrthoDB" id="9808559at2"/>
<dbReference type="PhylomeDB" id="Q3J1Q2"/>
<dbReference type="Proteomes" id="UP000002703">
    <property type="component" value="Chromosome 1"/>
</dbReference>
<dbReference type="GO" id="GO:0005886">
    <property type="term" value="C:plasma membrane"/>
    <property type="evidence" value="ECO:0007669"/>
    <property type="project" value="UniProtKB-SubCell"/>
</dbReference>
<dbReference type="GO" id="GO:0051539">
    <property type="term" value="F:4 iron, 4 sulfur cluster binding"/>
    <property type="evidence" value="ECO:0007669"/>
    <property type="project" value="UniProtKB-KW"/>
</dbReference>
<dbReference type="GO" id="GO:0005506">
    <property type="term" value="F:iron ion binding"/>
    <property type="evidence" value="ECO:0007669"/>
    <property type="project" value="UniProtKB-UniRule"/>
</dbReference>
<dbReference type="GO" id="GO:0050136">
    <property type="term" value="F:NADH:ubiquinone reductase (non-electrogenic) activity"/>
    <property type="evidence" value="ECO:0007669"/>
    <property type="project" value="UniProtKB-UniRule"/>
</dbReference>
<dbReference type="GO" id="GO:0048038">
    <property type="term" value="F:quinone binding"/>
    <property type="evidence" value="ECO:0007669"/>
    <property type="project" value="UniProtKB-KW"/>
</dbReference>
<dbReference type="GO" id="GO:0009060">
    <property type="term" value="P:aerobic respiration"/>
    <property type="evidence" value="ECO:0007669"/>
    <property type="project" value="TreeGrafter"/>
</dbReference>
<dbReference type="Gene3D" id="3.30.70.3270">
    <property type="match status" value="1"/>
</dbReference>
<dbReference type="HAMAP" id="MF_01351">
    <property type="entry name" value="NDH1_NuoI"/>
    <property type="match status" value="1"/>
</dbReference>
<dbReference type="InterPro" id="IPR017896">
    <property type="entry name" value="4Fe4S_Fe-S-bd"/>
</dbReference>
<dbReference type="InterPro" id="IPR017900">
    <property type="entry name" value="4Fe4S_Fe_S_CS"/>
</dbReference>
<dbReference type="InterPro" id="IPR010226">
    <property type="entry name" value="NADH_quinone_OxRdtase_chainI"/>
</dbReference>
<dbReference type="NCBIfam" id="TIGR01971">
    <property type="entry name" value="NuoI"/>
    <property type="match status" value="1"/>
</dbReference>
<dbReference type="NCBIfam" id="NF004536">
    <property type="entry name" value="PRK05888.1-1"/>
    <property type="match status" value="1"/>
</dbReference>
<dbReference type="PANTHER" id="PTHR10849:SF20">
    <property type="entry name" value="NADH DEHYDROGENASE [UBIQUINONE] IRON-SULFUR PROTEIN 8, MITOCHONDRIAL"/>
    <property type="match status" value="1"/>
</dbReference>
<dbReference type="PANTHER" id="PTHR10849">
    <property type="entry name" value="NADH DEHYDROGENASE UBIQUINONE IRON-SULFUR PROTEIN 8, MITOCHONDRIAL"/>
    <property type="match status" value="1"/>
</dbReference>
<dbReference type="Pfam" id="PF12838">
    <property type="entry name" value="Fer4_7"/>
    <property type="match status" value="1"/>
</dbReference>
<dbReference type="SUPFAM" id="SSF54862">
    <property type="entry name" value="4Fe-4S ferredoxins"/>
    <property type="match status" value="1"/>
</dbReference>
<dbReference type="PROSITE" id="PS00198">
    <property type="entry name" value="4FE4S_FER_1"/>
    <property type="match status" value="2"/>
</dbReference>
<dbReference type="PROSITE" id="PS51379">
    <property type="entry name" value="4FE4S_FER_2"/>
    <property type="match status" value="2"/>
</dbReference>
<feature type="chain" id="PRO_0000245740" description="NADH-quinone oxidoreductase subunit I 2">
    <location>
        <begin position="1"/>
        <end position="164"/>
    </location>
</feature>
<feature type="domain" description="4Fe-4S ferredoxin-type 1" evidence="1">
    <location>
        <begin position="39"/>
        <end position="71"/>
    </location>
</feature>
<feature type="domain" description="4Fe-4S ferredoxin-type 2" evidence="1">
    <location>
        <begin position="81"/>
        <end position="110"/>
    </location>
</feature>
<feature type="binding site" evidence="1">
    <location>
        <position position="51"/>
    </location>
    <ligand>
        <name>[4Fe-4S] cluster</name>
        <dbReference type="ChEBI" id="CHEBI:49883"/>
        <label>1</label>
    </ligand>
</feature>
<feature type="binding site" evidence="1">
    <location>
        <position position="54"/>
    </location>
    <ligand>
        <name>[4Fe-4S] cluster</name>
        <dbReference type="ChEBI" id="CHEBI:49883"/>
        <label>1</label>
    </ligand>
</feature>
<feature type="binding site" evidence="1">
    <location>
        <position position="57"/>
    </location>
    <ligand>
        <name>[4Fe-4S] cluster</name>
        <dbReference type="ChEBI" id="CHEBI:49883"/>
        <label>1</label>
    </ligand>
</feature>
<feature type="binding site" evidence="1">
    <location>
        <position position="61"/>
    </location>
    <ligand>
        <name>[4Fe-4S] cluster</name>
        <dbReference type="ChEBI" id="CHEBI:49883"/>
        <label>2</label>
    </ligand>
</feature>
<feature type="binding site" evidence="1">
    <location>
        <position position="90"/>
    </location>
    <ligand>
        <name>[4Fe-4S] cluster</name>
        <dbReference type="ChEBI" id="CHEBI:49883"/>
        <label>2</label>
    </ligand>
</feature>
<feature type="binding site" evidence="1">
    <location>
        <position position="93"/>
    </location>
    <ligand>
        <name>[4Fe-4S] cluster</name>
        <dbReference type="ChEBI" id="CHEBI:49883"/>
        <label>2</label>
    </ligand>
</feature>
<feature type="binding site" evidence="1">
    <location>
        <position position="96"/>
    </location>
    <ligand>
        <name>[4Fe-4S] cluster</name>
        <dbReference type="ChEBI" id="CHEBI:49883"/>
        <label>2</label>
    </ligand>
</feature>
<feature type="binding site" evidence="1">
    <location>
        <position position="100"/>
    </location>
    <ligand>
        <name>[4Fe-4S] cluster</name>
        <dbReference type="ChEBI" id="CHEBI:49883"/>
        <label>1</label>
    </ligand>
</feature>
<proteinExistence type="inferred from homology"/>
<organism>
    <name type="scientific">Cereibacter sphaeroides (strain ATCC 17023 / DSM 158 / JCM 6121 / CCUG 31486 / LMG 2827 / NBRC 12203 / NCIMB 8253 / ATH 2.4.1.)</name>
    <name type="common">Rhodobacter sphaeroides</name>
    <dbReference type="NCBI Taxonomy" id="272943"/>
    <lineage>
        <taxon>Bacteria</taxon>
        <taxon>Pseudomonadati</taxon>
        <taxon>Pseudomonadota</taxon>
        <taxon>Alphaproteobacteria</taxon>
        <taxon>Rhodobacterales</taxon>
        <taxon>Paracoccaceae</taxon>
        <taxon>Cereibacter</taxon>
    </lineage>
</organism>
<name>NUOI2_CERS4</name>
<comment type="function">
    <text evidence="1">NDH-1 shuttles electrons from NADH, via FMN and iron-sulfur (Fe-S) centers, to quinones in the respiratory chain. The immediate electron acceptor for the enzyme in this species is believed to be ubiquinone. Couples the redox reaction to proton translocation (for every two electrons transferred, four hydrogen ions are translocated across the cytoplasmic membrane), and thus conserves the redox energy in a proton gradient.</text>
</comment>
<comment type="catalytic activity">
    <reaction evidence="1">
        <text>a quinone + NADH + 5 H(+)(in) = a quinol + NAD(+) + 4 H(+)(out)</text>
        <dbReference type="Rhea" id="RHEA:57888"/>
        <dbReference type="ChEBI" id="CHEBI:15378"/>
        <dbReference type="ChEBI" id="CHEBI:24646"/>
        <dbReference type="ChEBI" id="CHEBI:57540"/>
        <dbReference type="ChEBI" id="CHEBI:57945"/>
        <dbReference type="ChEBI" id="CHEBI:132124"/>
    </reaction>
</comment>
<comment type="cofactor">
    <cofactor evidence="1">
        <name>[4Fe-4S] cluster</name>
        <dbReference type="ChEBI" id="CHEBI:49883"/>
    </cofactor>
    <text evidence="1">Binds 2 [4Fe-4S] clusters per subunit.</text>
</comment>
<comment type="subunit">
    <text evidence="1">NDH-1 is composed of 14 different subunits. Subunits NuoA, H, J, K, L, M, N constitute the membrane sector of the complex.</text>
</comment>
<comment type="subcellular location">
    <subcellularLocation>
        <location evidence="1">Cell inner membrane</location>
        <topology evidence="1">Peripheral membrane protein</topology>
    </subcellularLocation>
</comment>
<comment type="similarity">
    <text evidence="1">Belongs to the complex I 23 kDa subunit family.</text>
</comment>
<evidence type="ECO:0000255" key="1">
    <source>
        <dbReference type="HAMAP-Rule" id="MF_01351"/>
    </source>
</evidence>
<keyword id="KW-0004">4Fe-4S</keyword>
<keyword id="KW-0997">Cell inner membrane</keyword>
<keyword id="KW-1003">Cell membrane</keyword>
<keyword id="KW-0408">Iron</keyword>
<keyword id="KW-0411">Iron-sulfur</keyword>
<keyword id="KW-0472">Membrane</keyword>
<keyword id="KW-0479">Metal-binding</keyword>
<keyword id="KW-0520">NAD</keyword>
<keyword id="KW-0874">Quinone</keyword>
<keyword id="KW-1185">Reference proteome</keyword>
<keyword id="KW-0677">Repeat</keyword>
<keyword id="KW-1278">Translocase</keyword>
<keyword id="KW-0830">Ubiquinone</keyword>
<protein>
    <recommendedName>
        <fullName evidence="1">NADH-quinone oxidoreductase subunit I 2</fullName>
        <ecNumber evidence="1">7.1.1.-</ecNumber>
    </recommendedName>
    <alternativeName>
        <fullName evidence="1">NADH dehydrogenase I subunit I 2</fullName>
    </alternativeName>
    <alternativeName>
        <fullName evidence="1">NDH-1 subunit I 2</fullName>
    </alternativeName>
</protein>
<gene>
    <name evidence="1" type="primary">nuoI2</name>
    <name type="ordered locus">RHOS4_17140</name>
    <name type="ORF">RSP_0107</name>
</gene>
<accession>Q3J1Q2</accession>